<evidence type="ECO:0000255" key="1">
    <source>
        <dbReference type="HAMAP-Rule" id="MF_01386"/>
    </source>
</evidence>
<evidence type="ECO:0000305" key="2"/>
<gene>
    <name evidence="1" type="primary">psbX</name>
    <name type="ordered locus">MAE_51330</name>
</gene>
<dbReference type="EMBL" id="AP009552">
    <property type="protein sequence ID" value="BAG04955.1"/>
    <property type="status" value="ALT_INIT"/>
    <property type="molecule type" value="Genomic_DNA"/>
</dbReference>
<dbReference type="RefSeq" id="WP_002759073.1">
    <property type="nucleotide sequence ID" value="NC_010296.1"/>
</dbReference>
<dbReference type="SMR" id="B0JX68"/>
<dbReference type="STRING" id="449447.MAE_51330"/>
<dbReference type="PaxDb" id="449447-MAE_51330"/>
<dbReference type="EnsemblBacteria" id="BAG04955">
    <property type="protein sequence ID" value="BAG04955"/>
    <property type="gene ID" value="MAE_51330"/>
</dbReference>
<dbReference type="KEGG" id="mar:MAE_51330"/>
<dbReference type="eggNOG" id="ENOG5033AJK">
    <property type="taxonomic scope" value="Bacteria"/>
</dbReference>
<dbReference type="HOGENOM" id="CLU_212837_1_0_3"/>
<dbReference type="BioCyc" id="MAER449447:MAE_RS22310-MONOMER"/>
<dbReference type="Proteomes" id="UP000001510">
    <property type="component" value="Chromosome"/>
</dbReference>
<dbReference type="GO" id="GO:0009523">
    <property type="term" value="C:photosystem II"/>
    <property type="evidence" value="ECO:0007669"/>
    <property type="project" value="UniProtKB-KW"/>
</dbReference>
<dbReference type="GO" id="GO:0031676">
    <property type="term" value="C:plasma membrane-derived thylakoid membrane"/>
    <property type="evidence" value="ECO:0007669"/>
    <property type="project" value="UniProtKB-SubCell"/>
</dbReference>
<dbReference type="GO" id="GO:0015979">
    <property type="term" value="P:photosynthesis"/>
    <property type="evidence" value="ECO:0007669"/>
    <property type="project" value="UniProtKB-UniRule"/>
</dbReference>
<dbReference type="Gene3D" id="1.20.5.510">
    <property type="entry name" value="Single helix bin"/>
    <property type="match status" value="1"/>
</dbReference>
<dbReference type="HAMAP" id="MF_01386">
    <property type="entry name" value="PSII_PsbX_1"/>
    <property type="match status" value="1"/>
</dbReference>
<dbReference type="InterPro" id="IPR009518">
    <property type="entry name" value="PSII_PsbX"/>
</dbReference>
<dbReference type="InterPro" id="IPR023431">
    <property type="entry name" value="PSII_PsbX_type_1_subfam"/>
</dbReference>
<dbReference type="Pfam" id="PF06596">
    <property type="entry name" value="PsbX"/>
    <property type="match status" value="1"/>
</dbReference>
<proteinExistence type="inferred from homology"/>
<name>PSBX_MICAN</name>
<sequence length="39" mass="4276">MTPSLANFLWSLVLGAAIVLIPATIGLIFISQYDKIKRT</sequence>
<accession>B0JX68</accession>
<reference key="1">
    <citation type="journal article" date="2007" name="DNA Res.">
        <title>Complete genomic structure of the bloom-forming toxic cyanobacterium Microcystis aeruginosa NIES-843.</title>
        <authorList>
            <person name="Kaneko T."/>
            <person name="Nakajima N."/>
            <person name="Okamoto S."/>
            <person name="Suzuki I."/>
            <person name="Tanabe Y."/>
            <person name="Tamaoki M."/>
            <person name="Nakamura Y."/>
            <person name="Kasai F."/>
            <person name="Watanabe A."/>
            <person name="Kawashima K."/>
            <person name="Kishida Y."/>
            <person name="Ono A."/>
            <person name="Shimizu Y."/>
            <person name="Takahashi C."/>
            <person name="Minami C."/>
            <person name="Fujishiro T."/>
            <person name="Kohara M."/>
            <person name="Katoh M."/>
            <person name="Nakazaki N."/>
            <person name="Nakayama S."/>
            <person name="Yamada M."/>
            <person name="Tabata S."/>
            <person name="Watanabe M.M."/>
        </authorList>
    </citation>
    <scope>NUCLEOTIDE SEQUENCE [LARGE SCALE GENOMIC DNA]</scope>
    <source>
        <strain>NIES-843 / IAM M-247</strain>
    </source>
</reference>
<organism>
    <name type="scientific">Microcystis aeruginosa (strain NIES-843 / IAM M-2473)</name>
    <dbReference type="NCBI Taxonomy" id="449447"/>
    <lineage>
        <taxon>Bacteria</taxon>
        <taxon>Bacillati</taxon>
        <taxon>Cyanobacteriota</taxon>
        <taxon>Cyanophyceae</taxon>
        <taxon>Oscillatoriophycideae</taxon>
        <taxon>Chroococcales</taxon>
        <taxon>Microcystaceae</taxon>
        <taxon>Microcystis</taxon>
    </lineage>
</organism>
<keyword id="KW-0472">Membrane</keyword>
<keyword id="KW-0602">Photosynthesis</keyword>
<keyword id="KW-0604">Photosystem II</keyword>
<keyword id="KW-0793">Thylakoid</keyword>
<keyword id="KW-0812">Transmembrane</keyword>
<keyword id="KW-1133">Transmembrane helix</keyword>
<feature type="chain" id="PRO_0000345366" description="Photosystem II reaction center protein X">
    <location>
        <begin position="1"/>
        <end position="39"/>
    </location>
</feature>
<feature type="transmembrane region" description="Helical" evidence="1">
    <location>
        <begin position="10"/>
        <end position="30"/>
    </location>
</feature>
<comment type="function">
    <text evidence="1">Involved in the binding and/or turnover of quinones at the Q(B) site of photosystem II (PSII). PSII is a light-driven water plastoquinone oxidoreductase, using light energy to abstract electrons from H(2)O, generating a proton gradient subsequently used for ATP formation.</text>
</comment>
<comment type="subunit">
    <text evidence="1">PSII is composed of 1 copy each of membrane proteins PsbA, PsbB, PsbC, PsbD, PsbE, PsbF, PsbH, PsbI, PsbJ, PsbK, PsbL, PsbM, PsbT, PsbX, PsbY, PsbZ, Psb30/Ycf12, peripheral proteins PsbO, CyanoQ (PsbQ), PsbU, PsbV and a large number of cofactors. It forms dimeric complexes.</text>
</comment>
<comment type="subcellular location">
    <subcellularLocation>
        <location evidence="1">Cellular thylakoid membrane</location>
        <topology evidence="1">Single-pass membrane protein</topology>
    </subcellularLocation>
</comment>
<comment type="similarity">
    <text evidence="1">Belongs to the PsbX family. Type 1 subfamily.</text>
</comment>
<comment type="sequence caution" evidence="2">
    <conflict type="erroneous initiation">
        <sequence resource="EMBL-CDS" id="BAG04955"/>
    </conflict>
    <text>Extended N-terminus.</text>
</comment>
<protein>
    <recommendedName>
        <fullName evidence="1">Photosystem II reaction center protein X</fullName>
    </recommendedName>
</protein>